<dbReference type="EC" id="2.7.1.31"/>
<dbReference type="EMBL" id="AF455785">
    <property type="protein sequence ID" value="AAP97704.1"/>
    <property type="status" value="ALT_FRAME"/>
    <property type="molecule type" value="mRNA"/>
</dbReference>
<dbReference type="EMBL" id="AK049425">
    <property type="protein sequence ID" value="BAC33747.1"/>
    <property type="molecule type" value="mRNA"/>
</dbReference>
<dbReference type="EMBL" id="AK050182">
    <property type="protein sequence ID" value="BAC34112.1"/>
    <property type="molecule type" value="mRNA"/>
</dbReference>
<dbReference type="EMBL" id="AK052709">
    <property type="protein sequence ID" value="BAC35110.1"/>
    <property type="molecule type" value="mRNA"/>
</dbReference>
<dbReference type="EMBL" id="BC025834">
    <property type="protein sequence ID" value="AAH25834.1"/>
    <property type="molecule type" value="mRNA"/>
</dbReference>
<dbReference type="EMBL" id="BC025935">
    <property type="protein sequence ID" value="AAH25935.1"/>
    <property type="molecule type" value="mRNA"/>
</dbReference>
<dbReference type="EMBL" id="BC030732">
    <property type="protein sequence ID" value="AAH30732.1"/>
    <property type="molecule type" value="mRNA"/>
</dbReference>
<dbReference type="EMBL" id="BC033063">
    <property type="protein sequence ID" value="AAH33063.1"/>
    <property type="molecule type" value="mRNA"/>
</dbReference>
<dbReference type="EMBL" id="BC036136">
    <property type="protein sequence ID" value="AAH36136.1"/>
    <property type="status" value="ALT_INIT"/>
    <property type="molecule type" value="mRNA"/>
</dbReference>
<dbReference type="CCDS" id="CCDS23469.1">
    <molecule id="Q8QZY2-1"/>
</dbReference>
<dbReference type="RefSeq" id="NP_001034675.1">
    <property type="nucleotide sequence ID" value="NM_001039586.1"/>
</dbReference>
<dbReference type="RefSeq" id="NP_777271.3">
    <property type="nucleotide sequence ID" value="NM_174846.4"/>
</dbReference>
<dbReference type="RefSeq" id="XP_006511778.1">
    <property type="nucleotide sequence ID" value="XM_006511715.3"/>
</dbReference>
<dbReference type="RefSeq" id="XP_011241181.1">
    <property type="nucleotide sequence ID" value="XM_011242879.2"/>
</dbReference>
<dbReference type="RefSeq" id="XP_011241182.1">
    <property type="nucleotide sequence ID" value="XM_011242880.2"/>
</dbReference>
<dbReference type="SMR" id="Q8QZY2"/>
<dbReference type="FunCoup" id="Q8QZY2">
    <property type="interactions" value="675"/>
</dbReference>
<dbReference type="STRING" id="10090.ENSMUSP00000047761"/>
<dbReference type="GlyGen" id="Q8QZY2">
    <property type="glycosylation" value="1 site"/>
</dbReference>
<dbReference type="iPTMnet" id="Q8QZY2"/>
<dbReference type="PhosphoSitePlus" id="Q8QZY2"/>
<dbReference type="SwissPalm" id="Q8QZY2"/>
<dbReference type="jPOST" id="Q8QZY2"/>
<dbReference type="PaxDb" id="10090-ENSMUSP00000047761"/>
<dbReference type="ProteomicsDB" id="263364">
    <molecule id="Q8QZY2-1"/>
</dbReference>
<dbReference type="ProteomicsDB" id="263365">
    <molecule id="Q8QZY2-2"/>
</dbReference>
<dbReference type="DNASU" id="235582"/>
<dbReference type="GeneID" id="235582"/>
<dbReference type="KEGG" id="mmu:235582"/>
<dbReference type="UCSC" id="uc009riz.1">
    <molecule id="Q8QZY2-1"/>
    <property type="organism name" value="mouse"/>
</dbReference>
<dbReference type="AGR" id="MGI:2444085"/>
<dbReference type="CTD" id="132158"/>
<dbReference type="MGI" id="MGI:2444085">
    <property type="gene designation" value="Glyctk"/>
</dbReference>
<dbReference type="eggNOG" id="KOG3935">
    <property type="taxonomic scope" value="Eukaryota"/>
</dbReference>
<dbReference type="InParanoid" id="Q8QZY2"/>
<dbReference type="OrthoDB" id="44918at2759"/>
<dbReference type="PhylomeDB" id="Q8QZY2"/>
<dbReference type="TreeFam" id="TF313770"/>
<dbReference type="Reactome" id="R-MMU-70350">
    <property type="pathway name" value="Fructose catabolism"/>
</dbReference>
<dbReference type="BioGRID-ORCS" id="235582">
    <property type="hits" value="1 hit in 77 CRISPR screens"/>
</dbReference>
<dbReference type="ChiTaRS" id="Glyctk">
    <property type="organism name" value="mouse"/>
</dbReference>
<dbReference type="PRO" id="PR:Q8QZY2"/>
<dbReference type="Proteomes" id="UP000000589">
    <property type="component" value="Unplaced"/>
</dbReference>
<dbReference type="RNAct" id="Q8QZY2">
    <property type="molecule type" value="protein"/>
</dbReference>
<dbReference type="GO" id="GO:0005737">
    <property type="term" value="C:cytoplasm"/>
    <property type="evidence" value="ECO:0000250"/>
    <property type="project" value="UniProtKB"/>
</dbReference>
<dbReference type="GO" id="GO:0005829">
    <property type="term" value="C:cytosol"/>
    <property type="evidence" value="ECO:0000266"/>
    <property type="project" value="MGI"/>
</dbReference>
<dbReference type="GO" id="GO:0005739">
    <property type="term" value="C:mitochondrion"/>
    <property type="evidence" value="ECO:0007005"/>
    <property type="project" value="MGI"/>
</dbReference>
<dbReference type="GO" id="GO:0005524">
    <property type="term" value="F:ATP binding"/>
    <property type="evidence" value="ECO:0007669"/>
    <property type="project" value="UniProtKB-KW"/>
</dbReference>
<dbReference type="GO" id="GO:0008887">
    <property type="term" value="F:glycerate kinase activity"/>
    <property type="evidence" value="ECO:0000250"/>
    <property type="project" value="UniProtKB"/>
</dbReference>
<dbReference type="GO" id="GO:0006001">
    <property type="term" value="P:fructose catabolic process"/>
    <property type="evidence" value="ECO:0000314"/>
    <property type="project" value="MGI"/>
</dbReference>
<dbReference type="GO" id="GO:0006468">
    <property type="term" value="P:protein phosphorylation"/>
    <property type="evidence" value="ECO:0000250"/>
    <property type="project" value="UniProtKB"/>
</dbReference>
<dbReference type="FunFam" id="3.40.50.10180:FF:000001">
    <property type="entry name" value="Glycerate kinase"/>
    <property type="match status" value="1"/>
</dbReference>
<dbReference type="Gene3D" id="3.40.50.10180">
    <property type="entry name" value="Glycerate kinase, MOFRL-like N-terminal domain"/>
    <property type="match status" value="1"/>
</dbReference>
<dbReference type="Gene3D" id="3.40.1480.10">
    <property type="entry name" value="MOFRL domain"/>
    <property type="match status" value="1"/>
</dbReference>
<dbReference type="InterPro" id="IPR037035">
    <property type="entry name" value="GK-like_C_sf"/>
</dbReference>
<dbReference type="InterPro" id="IPR038614">
    <property type="entry name" value="GK_N_sf"/>
</dbReference>
<dbReference type="InterPro" id="IPR007835">
    <property type="entry name" value="MOFRL"/>
</dbReference>
<dbReference type="InterPro" id="IPR025286">
    <property type="entry name" value="MOFRL_assoc_dom"/>
</dbReference>
<dbReference type="InterPro" id="IPR039760">
    <property type="entry name" value="MOFRL_protein"/>
</dbReference>
<dbReference type="PANTHER" id="PTHR12227">
    <property type="entry name" value="GLYCERATE KINASE"/>
    <property type="match status" value="1"/>
</dbReference>
<dbReference type="PANTHER" id="PTHR12227:SF0">
    <property type="entry name" value="GLYCERATE KINASE"/>
    <property type="match status" value="1"/>
</dbReference>
<dbReference type="Pfam" id="PF13660">
    <property type="entry name" value="DUF4147"/>
    <property type="match status" value="1"/>
</dbReference>
<dbReference type="Pfam" id="PF05161">
    <property type="entry name" value="MOFRL"/>
    <property type="match status" value="1"/>
</dbReference>
<dbReference type="SUPFAM" id="SSF82544">
    <property type="entry name" value="GckA/TtuD-like"/>
    <property type="match status" value="1"/>
</dbReference>
<feature type="chain" id="PRO_0000287194" description="Glycerate kinase">
    <location>
        <begin position="1"/>
        <end position="523"/>
    </location>
</feature>
<feature type="modified residue" description="Phosphoserine" evidence="1">
    <location>
        <position position="60"/>
    </location>
</feature>
<feature type="modified residue" description="N6-acetyllysine" evidence="5">
    <location>
        <position position="200"/>
    </location>
</feature>
<feature type="splice variant" id="VSP_025366" description="In isoform 2." evidence="3">
    <location>
        <begin position="1"/>
        <end position="127"/>
    </location>
</feature>
<feature type="sequence conflict" description="In Ref. 2; BAC33747/BAC34112/BAC35110." evidence="4" ref="2">
    <original>V</original>
    <variation>I</variation>
    <location>
        <position position="136"/>
    </location>
</feature>
<feature type="sequence conflict" description="In Ref. 1; AAP97704." evidence="4" ref="1">
    <original>F</original>
    <variation>Y</variation>
    <location>
        <position position="139"/>
    </location>
</feature>
<feature type="sequence conflict" description="In Ref. 2; BAC33747." evidence="4" ref="2">
    <original>Q</original>
    <variation>H</variation>
    <location>
        <position position="235"/>
    </location>
</feature>
<feature type="sequence conflict" description="In Ref. 2; BAC33747/BAC34112/BAC35110." evidence="4" ref="2">
    <original>A</original>
    <variation>T</variation>
    <location>
        <position position="261"/>
    </location>
</feature>
<feature type="sequence conflict" description="In Ref. 2; BAC34112." evidence="4" ref="2">
    <original>Q</original>
    <variation>R</variation>
    <location>
        <position position="338"/>
    </location>
</feature>
<feature type="sequence conflict" description="In Ref. 2; BAC33747/BAC34112/BAC35110." evidence="4" ref="2">
    <original>A</original>
    <variation>V</variation>
    <location>
        <position position="396"/>
    </location>
</feature>
<feature type="sequence conflict" description="In Ref. 2; BAC33747/BAC34112/BAC35110." evidence="4" ref="2">
    <original>T</original>
    <variation>A</variation>
    <location>
        <position position="485"/>
    </location>
</feature>
<reference key="1">
    <citation type="submission" date="2001-12" db="EMBL/GenBank/DDBJ databases">
        <authorList>
            <person name="Zan Q."/>
            <person name="Guo J.H."/>
            <person name="Yu L."/>
        </authorList>
    </citation>
    <scope>NUCLEOTIDE SEQUENCE [LARGE SCALE MRNA] (ISOFORM 1)</scope>
    <source>
        <tissue>Kidney</tissue>
    </source>
</reference>
<reference key="2">
    <citation type="journal article" date="2005" name="Science">
        <title>The transcriptional landscape of the mammalian genome.</title>
        <authorList>
            <person name="Carninci P."/>
            <person name="Kasukawa T."/>
            <person name="Katayama S."/>
            <person name="Gough J."/>
            <person name="Frith M.C."/>
            <person name="Maeda N."/>
            <person name="Oyama R."/>
            <person name="Ravasi T."/>
            <person name="Lenhard B."/>
            <person name="Wells C."/>
            <person name="Kodzius R."/>
            <person name="Shimokawa K."/>
            <person name="Bajic V.B."/>
            <person name="Brenner S.E."/>
            <person name="Batalov S."/>
            <person name="Forrest A.R."/>
            <person name="Zavolan M."/>
            <person name="Davis M.J."/>
            <person name="Wilming L.G."/>
            <person name="Aidinis V."/>
            <person name="Allen J.E."/>
            <person name="Ambesi-Impiombato A."/>
            <person name="Apweiler R."/>
            <person name="Aturaliya R.N."/>
            <person name="Bailey T.L."/>
            <person name="Bansal M."/>
            <person name="Baxter L."/>
            <person name="Beisel K.W."/>
            <person name="Bersano T."/>
            <person name="Bono H."/>
            <person name="Chalk A.M."/>
            <person name="Chiu K.P."/>
            <person name="Choudhary V."/>
            <person name="Christoffels A."/>
            <person name="Clutterbuck D.R."/>
            <person name="Crowe M.L."/>
            <person name="Dalla E."/>
            <person name="Dalrymple B.P."/>
            <person name="de Bono B."/>
            <person name="Della Gatta G."/>
            <person name="di Bernardo D."/>
            <person name="Down T."/>
            <person name="Engstrom P."/>
            <person name="Fagiolini M."/>
            <person name="Faulkner G."/>
            <person name="Fletcher C.F."/>
            <person name="Fukushima T."/>
            <person name="Furuno M."/>
            <person name="Futaki S."/>
            <person name="Gariboldi M."/>
            <person name="Georgii-Hemming P."/>
            <person name="Gingeras T.R."/>
            <person name="Gojobori T."/>
            <person name="Green R.E."/>
            <person name="Gustincich S."/>
            <person name="Harbers M."/>
            <person name="Hayashi Y."/>
            <person name="Hensch T.K."/>
            <person name="Hirokawa N."/>
            <person name="Hill D."/>
            <person name="Huminiecki L."/>
            <person name="Iacono M."/>
            <person name="Ikeo K."/>
            <person name="Iwama A."/>
            <person name="Ishikawa T."/>
            <person name="Jakt M."/>
            <person name="Kanapin A."/>
            <person name="Katoh M."/>
            <person name="Kawasawa Y."/>
            <person name="Kelso J."/>
            <person name="Kitamura H."/>
            <person name="Kitano H."/>
            <person name="Kollias G."/>
            <person name="Krishnan S.P."/>
            <person name="Kruger A."/>
            <person name="Kummerfeld S.K."/>
            <person name="Kurochkin I.V."/>
            <person name="Lareau L.F."/>
            <person name="Lazarevic D."/>
            <person name="Lipovich L."/>
            <person name="Liu J."/>
            <person name="Liuni S."/>
            <person name="McWilliam S."/>
            <person name="Madan Babu M."/>
            <person name="Madera M."/>
            <person name="Marchionni L."/>
            <person name="Matsuda H."/>
            <person name="Matsuzawa S."/>
            <person name="Miki H."/>
            <person name="Mignone F."/>
            <person name="Miyake S."/>
            <person name="Morris K."/>
            <person name="Mottagui-Tabar S."/>
            <person name="Mulder N."/>
            <person name="Nakano N."/>
            <person name="Nakauchi H."/>
            <person name="Ng P."/>
            <person name="Nilsson R."/>
            <person name="Nishiguchi S."/>
            <person name="Nishikawa S."/>
            <person name="Nori F."/>
            <person name="Ohara O."/>
            <person name="Okazaki Y."/>
            <person name="Orlando V."/>
            <person name="Pang K.C."/>
            <person name="Pavan W.J."/>
            <person name="Pavesi G."/>
            <person name="Pesole G."/>
            <person name="Petrovsky N."/>
            <person name="Piazza S."/>
            <person name="Reed J."/>
            <person name="Reid J.F."/>
            <person name="Ring B.Z."/>
            <person name="Ringwald M."/>
            <person name="Rost B."/>
            <person name="Ruan Y."/>
            <person name="Salzberg S.L."/>
            <person name="Sandelin A."/>
            <person name="Schneider C."/>
            <person name="Schoenbach C."/>
            <person name="Sekiguchi K."/>
            <person name="Semple C.A."/>
            <person name="Seno S."/>
            <person name="Sessa L."/>
            <person name="Sheng Y."/>
            <person name="Shibata Y."/>
            <person name="Shimada H."/>
            <person name="Shimada K."/>
            <person name="Silva D."/>
            <person name="Sinclair B."/>
            <person name="Sperling S."/>
            <person name="Stupka E."/>
            <person name="Sugiura K."/>
            <person name="Sultana R."/>
            <person name="Takenaka Y."/>
            <person name="Taki K."/>
            <person name="Tammoja K."/>
            <person name="Tan S.L."/>
            <person name="Tang S."/>
            <person name="Taylor M.S."/>
            <person name="Tegner J."/>
            <person name="Teichmann S.A."/>
            <person name="Ueda H.R."/>
            <person name="van Nimwegen E."/>
            <person name="Verardo R."/>
            <person name="Wei C.L."/>
            <person name="Yagi K."/>
            <person name="Yamanishi H."/>
            <person name="Zabarovsky E."/>
            <person name="Zhu S."/>
            <person name="Zimmer A."/>
            <person name="Hide W."/>
            <person name="Bult C."/>
            <person name="Grimmond S.M."/>
            <person name="Teasdale R.D."/>
            <person name="Liu E.T."/>
            <person name="Brusic V."/>
            <person name="Quackenbush J."/>
            <person name="Wahlestedt C."/>
            <person name="Mattick J.S."/>
            <person name="Hume D.A."/>
            <person name="Kai C."/>
            <person name="Sasaki D."/>
            <person name="Tomaru Y."/>
            <person name="Fukuda S."/>
            <person name="Kanamori-Katayama M."/>
            <person name="Suzuki M."/>
            <person name="Aoki J."/>
            <person name="Arakawa T."/>
            <person name="Iida J."/>
            <person name="Imamura K."/>
            <person name="Itoh M."/>
            <person name="Kato T."/>
            <person name="Kawaji H."/>
            <person name="Kawagashira N."/>
            <person name="Kawashima T."/>
            <person name="Kojima M."/>
            <person name="Kondo S."/>
            <person name="Konno H."/>
            <person name="Nakano K."/>
            <person name="Ninomiya N."/>
            <person name="Nishio T."/>
            <person name="Okada M."/>
            <person name="Plessy C."/>
            <person name="Shibata K."/>
            <person name="Shiraki T."/>
            <person name="Suzuki S."/>
            <person name="Tagami M."/>
            <person name="Waki K."/>
            <person name="Watahiki A."/>
            <person name="Okamura-Oho Y."/>
            <person name="Suzuki H."/>
            <person name="Kawai J."/>
            <person name="Hayashizaki Y."/>
        </authorList>
    </citation>
    <scope>NUCLEOTIDE SEQUENCE [LARGE SCALE MRNA] (ISOFORM 1)</scope>
    <source>
        <strain>C57BL/6J</strain>
        <tissue>Kidney</tissue>
        <tissue>Liver</tissue>
    </source>
</reference>
<reference key="3">
    <citation type="journal article" date="2004" name="Genome Res.">
        <title>The status, quality, and expansion of the NIH full-length cDNA project: the Mammalian Gene Collection (MGC).</title>
        <authorList>
            <consortium name="The MGC Project Team"/>
        </authorList>
    </citation>
    <scope>NUCLEOTIDE SEQUENCE [LARGE SCALE MRNA] (ISOFORMS 1 AND 2)</scope>
    <source>
        <strain>FVB/N</strain>
        <tissue>Kidney</tissue>
        <tissue>Liver</tissue>
    </source>
</reference>
<reference key="4">
    <citation type="journal article" date="2006" name="DNA Seq.">
        <title>Isolation and characterization of the human D-glyceric acidemia related glycerate kinase gene GLYCTK1 and its alternatively splicing variant GLYCTK2.</title>
        <authorList>
            <person name="Guo J.-H."/>
            <person name="Hexige S."/>
            <person name="Chen L."/>
            <person name="Zhou G.-J."/>
            <person name="Wang X."/>
            <person name="Jiang J.-M."/>
            <person name="Kong Y.-H."/>
            <person name="Ji G.-Q."/>
            <person name="Wu C.-Q."/>
            <person name="Zhao S.-Y."/>
            <person name="Yu L."/>
        </authorList>
    </citation>
    <scope>TISSUE SPECIFICITY</scope>
</reference>
<reference key="5">
    <citation type="journal article" date="2010" name="Cell">
        <title>A tissue-specific atlas of mouse protein phosphorylation and expression.</title>
        <authorList>
            <person name="Huttlin E.L."/>
            <person name="Jedrychowski M.P."/>
            <person name="Elias J.E."/>
            <person name="Goswami T."/>
            <person name="Rad R."/>
            <person name="Beausoleil S.A."/>
            <person name="Villen J."/>
            <person name="Haas W."/>
            <person name="Sowa M.E."/>
            <person name="Gygi S.P."/>
        </authorList>
    </citation>
    <scope>IDENTIFICATION BY MASS SPECTROMETRY [LARGE SCALE ANALYSIS]</scope>
    <source>
        <tissue>Kidney</tissue>
        <tissue>Liver</tissue>
        <tissue>Testis</tissue>
    </source>
</reference>
<reference key="6">
    <citation type="journal article" date="2013" name="Proc. Natl. Acad. Sci. U.S.A.">
        <title>Label-free quantitative proteomics of the lysine acetylome in mitochondria identifies substrates of SIRT3 in metabolic pathways.</title>
        <authorList>
            <person name="Rardin M.J."/>
            <person name="Newman J.C."/>
            <person name="Held J.M."/>
            <person name="Cusack M.P."/>
            <person name="Sorensen D.J."/>
            <person name="Li B."/>
            <person name="Schilling B."/>
            <person name="Mooney S.D."/>
            <person name="Kahn C.R."/>
            <person name="Verdin E."/>
            <person name="Gibson B.W."/>
        </authorList>
    </citation>
    <scope>ACETYLATION [LARGE SCALE ANALYSIS] AT LYS-200</scope>
    <scope>IDENTIFICATION BY MASS SPECTROMETRY [LARGE SCALE ANALYSIS]</scope>
    <source>
        <tissue>Liver</tissue>
    </source>
</reference>
<name>GLCTK_MOUSE</name>
<proteinExistence type="evidence at protein level"/>
<sequence length="523" mass="55293">MAAALQVLPCLLRAPSRPLLWGPPVARMTSGMALAEQARQLFDSAVGAVQPGPMLQRTLSLDPSGRQLKVRDRTFQLRENLYLVGFGKAVLGMAAAAEELLAQHLVQGVISVPKGIRAAMEHAGKKEMLLKPHSRVQVFEGAEDNLPDRDALRAALTIQQLAEGLTADDLLLVLISGGGSALLPAPIPPVTLEEKQMLTKLLAARGATIQELNTIRKALSQLKGGGLAQAAYPAQVISLILSDVIGDPLEVIASGPTVASAHSVQDCLHILNHYGLRAALPRSVKTVLSRADSDPHGPHTCGHVLNVIIGSNSLALAEAQRQAEVLGYHAMVLSTAMQGDVKRVARFYGLLARVAAAHLTPSLAERPLEEEAELHQLAAELQLPDLQLEEALEAVAKAKGPVCLLAGGEPTVQLQGSGKGGRNQELALHVGVELGRQPLGPIDVLFLSGGTDGQDGPTKVAGAWVMSDLISQASAESLDIATSLTNNDSYTFFCRFRGGTHLLHTGLTGTNVMDVHLLILHPQ</sequence>
<accession>Q8QZY2</accession>
<accession>Q7TNX6</accession>
<accession>Q8BQL0</accession>
<accession>Q8C717</accession>
<accession>Q8C7I3</accession>
<accession>Q8CI81</accession>
<accession>Q8K0R7</accession>
<protein>
    <recommendedName>
        <fullName>Glycerate kinase</fullName>
        <ecNumber>2.7.1.31</ecNumber>
    </recommendedName>
</protein>
<comment type="catalytic activity">
    <reaction evidence="1">
        <text>(R)-glycerate + ATP = (2R)-3-phosphoglycerate + ADP + H(+)</text>
        <dbReference type="Rhea" id="RHEA:23516"/>
        <dbReference type="ChEBI" id="CHEBI:15378"/>
        <dbReference type="ChEBI" id="CHEBI:16659"/>
        <dbReference type="ChEBI" id="CHEBI:30616"/>
        <dbReference type="ChEBI" id="CHEBI:58272"/>
        <dbReference type="ChEBI" id="CHEBI:456216"/>
        <dbReference type="EC" id="2.7.1.31"/>
    </reaction>
</comment>
<comment type="subcellular location">
    <subcellularLocation>
        <location evidence="1">Cytoplasm</location>
    </subcellularLocation>
</comment>
<comment type="alternative products">
    <event type="alternative splicing"/>
    <isoform>
        <id>Q8QZY2-1</id>
        <name>1</name>
        <sequence type="displayed"/>
    </isoform>
    <isoform>
        <id>Q8QZY2-2</id>
        <name>2</name>
        <sequence type="described" ref="VSP_025366"/>
    </isoform>
</comment>
<comment type="tissue specificity">
    <text evidence="2">Expressed in the hippocampus, callus, brain, cerebellum, renal cortex interstitial cells, epithelium of interlobular bile duct and skeletal muscle.</text>
</comment>
<comment type="similarity">
    <text evidence="4">Belongs to the glycerate kinase type-2 family.</text>
</comment>
<comment type="sequence caution" evidence="4">
    <conflict type="erroneous initiation">
        <sequence resource="EMBL-CDS" id="AAH36136"/>
    </conflict>
</comment>
<comment type="sequence caution" evidence="4">
    <conflict type="frameshift">
        <sequence resource="EMBL-CDS" id="AAP97704"/>
    </conflict>
</comment>
<keyword id="KW-0007">Acetylation</keyword>
<keyword id="KW-0025">Alternative splicing</keyword>
<keyword id="KW-0067">ATP-binding</keyword>
<keyword id="KW-0963">Cytoplasm</keyword>
<keyword id="KW-0418">Kinase</keyword>
<keyword id="KW-0547">Nucleotide-binding</keyword>
<keyword id="KW-0597">Phosphoprotein</keyword>
<keyword id="KW-1185">Reference proteome</keyword>
<keyword id="KW-0808">Transferase</keyword>
<organism>
    <name type="scientific">Mus musculus</name>
    <name type="common">Mouse</name>
    <dbReference type="NCBI Taxonomy" id="10090"/>
    <lineage>
        <taxon>Eukaryota</taxon>
        <taxon>Metazoa</taxon>
        <taxon>Chordata</taxon>
        <taxon>Craniata</taxon>
        <taxon>Vertebrata</taxon>
        <taxon>Euteleostomi</taxon>
        <taxon>Mammalia</taxon>
        <taxon>Eutheria</taxon>
        <taxon>Euarchontoglires</taxon>
        <taxon>Glires</taxon>
        <taxon>Rodentia</taxon>
        <taxon>Myomorpha</taxon>
        <taxon>Muroidea</taxon>
        <taxon>Muridae</taxon>
        <taxon>Murinae</taxon>
        <taxon>Mus</taxon>
        <taxon>Mus</taxon>
    </lineage>
</organism>
<evidence type="ECO:0000250" key="1">
    <source>
        <dbReference type="UniProtKB" id="Q8IVS8"/>
    </source>
</evidence>
<evidence type="ECO:0000269" key="2">
    <source>
    </source>
</evidence>
<evidence type="ECO:0000303" key="3">
    <source>
    </source>
</evidence>
<evidence type="ECO:0000305" key="4"/>
<evidence type="ECO:0007744" key="5">
    <source>
    </source>
</evidence>
<gene>
    <name type="primary">Glyctk</name>
</gene>